<dbReference type="EC" id="3.1.3.89" evidence="1"/>
<dbReference type="EMBL" id="AL590842">
    <property type="protein sequence ID" value="CAL21184.1"/>
    <property type="molecule type" value="Genomic_DNA"/>
</dbReference>
<dbReference type="EMBL" id="AE009952">
    <property type="protein sequence ID" value="AAM85196.1"/>
    <property type="molecule type" value="Genomic_DNA"/>
</dbReference>
<dbReference type="EMBL" id="AE017042">
    <property type="protein sequence ID" value="AAS62575.1"/>
    <property type="molecule type" value="Genomic_DNA"/>
</dbReference>
<dbReference type="PIR" id="AE0312">
    <property type="entry name" value="AE0312"/>
</dbReference>
<dbReference type="RefSeq" id="YP_002347520.1">
    <property type="nucleotide sequence ID" value="NC_003143.1"/>
</dbReference>
<dbReference type="SMR" id="Q8ZDK3"/>
<dbReference type="STRING" id="214092.YPO2559"/>
<dbReference type="PaxDb" id="214092-YPO2559"/>
<dbReference type="DNASU" id="1146574"/>
<dbReference type="EnsemblBacteria" id="AAS62575">
    <property type="protein sequence ID" value="AAS62575"/>
    <property type="gene ID" value="YP_2370"/>
</dbReference>
<dbReference type="KEGG" id="ype:YPO2559"/>
<dbReference type="KEGG" id="ypk:y1627"/>
<dbReference type="KEGG" id="ypm:YP_2370"/>
<dbReference type="PATRIC" id="fig|214092.21.peg.2983"/>
<dbReference type="eggNOG" id="COG1896">
    <property type="taxonomic scope" value="Bacteria"/>
</dbReference>
<dbReference type="HOGENOM" id="CLU_084784_0_0_6"/>
<dbReference type="OMA" id="NQSHFFA"/>
<dbReference type="OrthoDB" id="9812744at2"/>
<dbReference type="Proteomes" id="UP000000815">
    <property type="component" value="Chromosome"/>
</dbReference>
<dbReference type="Proteomes" id="UP000001019">
    <property type="component" value="Chromosome"/>
</dbReference>
<dbReference type="Proteomes" id="UP000002490">
    <property type="component" value="Chromosome"/>
</dbReference>
<dbReference type="GO" id="GO:0005737">
    <property type="term" value="C:cytoplasm"/>
    <property type="evidence" value="ECO:0007669"/>
    <property type="project" value="UniProtKB-SubCell"/>
</dbReference>
<dbReference type="GO" id="GO:0002953">
    <property type="term" value="F:5'-deoxynucleotidase activity"/>
    <property type="evidence" value="ECO:0000318"/>
    <property type="project" value="GO_Central"/>
</dbReference>
<dbReference type="GO" id="GO:0046872">
    <property type="term" value="F:metal ion binding"/>
    <property type="evidence" value="ECO:0007669"/>
    <property type="project" value="UniProtKB-KW"/>
</dbReference>
<dbReference type="GO" id="GO:0000166">
    <property type="term" value="F:nucleotide binding"/>
    <property type="evidence" value="ECO:0007669"/>
    <property type="project" value="UniProtKB-KW"/>
</dbReference>
<dbReference type="FunFam" id="1.10.3210.10:FF:000002">
    <property type="entry name" value="Nucleotidase YfbR"/>
    <property type="match status" value="1"/>
</dbReference>
<dbReference type="Gene3D" id="1.10.3210.10">
    <property type="entry name" value="Hypothetical protein af1432"/>
    <property type="match status" value="1"/>
</dbReference>
<dbReference type="HAMAP" id="MF_01100">
    <property type="entry name" value="5DNU"/>
    <property type="match status" value="1"/>
</dbReference>
<dbReference type="InterPro" id="IPR003607">
    <property type="entry name" value="HD/PDEase_dom"/>
</dbReference>
<dbReference type="InterPro" id="IPR006674">
    <property type="entry name" value="HD_domain"/>
</dbReference>
<dbReference type="InterPro" id="IPR022971">
    <property type="entry name" value="YfbR"/>
</dbReference>
<dbReference type="InterPro" id="IPR039356">
    <property type="entry name" value="YfbR/HDDC2"/>
</dbReference>
<dbReference type="NCBIfam" id="NF003009">
    <property type="entry name" value="PRK03826.1"/>
    <property type="match status" value="1"/>
</dbReference>
<dbReference type="PANTHER" id="PTHR11845">
    <property type="entry name" value="5'-DEOXYNUCLEOTIDASE HDDC2"/>
    <property type="match status" value="1"/>
</dbReference>
<dbReference type="PANTHER" id="PTHR11845:SF13">
    <property type="entry name" value="5'-DEOXYNUCLEOTIDASE HDDC2"/>
    <property type="match status" value="1"/>
</dbReference>
<dbReference type="Pfam" id="PF12917">
    <property type="entry name" value="YfbR-like"/>
    <property type="match status" value="1"/>
</dbReference>
<dbReference type="SMART" id="SM00471">
    <property type="entry name" value="HDc"/>
    <property type="match status" value="1"/>
</dbReference>
<dbReference type="SUPFAM" id="SSF109604">
    <property type="entry name" value="HD-domain/PDEase-like"/>
    <property type="match status" value="1"/>
</dbReference>
<dbReference type="PROSITE" id="PS51831">
    <property type="entry name" value="HD"/>
    <property type="match status" value="1"/>
</dbReference>
<reference key="1">
    <citation type="journal article" date="2001" name="Nature">
        <title>Genome sequence of Yersinia pestis, the causative agent of plague.</title>
        <authorList>
            <person name="Parkhill J."/>
            <person name="Wren B.W."/>
            <person name="Thomson N.R."/>
            <person name="Titball R.W."/>
            <person name="Holden M.T.G."/>
            <person name="Prentice M.B."/>
            <person name="Sebaihia M."/>
            <person name="James K.D."/>
            <person name="Churcher C.M."/>
            <person name="Mungall K.L."/>
            <person name="Baker S."/>
            <person name="Basham D."/>
            <person name="Bentley S.D."/>
            <person name="Brooks K."/>
            <person name="Cerdeno-Tarraga A.-M."/>
            <person name="Chillingworth T."/>
            <person name="Cronin A."/>
            <person name="Davies R.M."/>
            <person name="Davis P."/>
            <person name="Dougan G."/>
            <person name="Feltwell T."/>
            <person name="Hamlin N."/>
            <person name="Holroyd S."/>
            <person name="Jagels K."/>
            <person name="Karlyshev A.V."/>
            <person name="Leather S."/>
            <person name="Moule S."/>
            <person name="Oyston P.C.F."/>
            <person name="Quail M.A."/>
            <person name="Rutherford K.M."/>
            <person name="Simmonds M."/>
            <person name="Skelton J."/>
            <person name="Stevens K."/>
            <person name="Whitehead S."/>
            <person name="Barrell B.G."/>
        </authorList>
    </citation>
    <scope>NUCLEOTIDE SEQUENCE [LARGE SCALE GENOMIC DNA]</scope>
    <source>
        <strain>CO-92 / Biovar Orientalis</strain>
    </source>
</reference>
<reference key="2">
    <citation type="journal article" date="2002" name="J. Bacteriol.">
        <title>Genome sequence of Yersinia pestis KIM.</title>
        <authorList>
            <person name="Deng W."/>
            <person name="Burland V."/>
            <person name="Plunkett G. III"/>
            <person name="Boutin A."/>
            <person name="Mayhew G.F."/>
            <person name="Liss P."/>
            <person name="Perna N.T."/>
            <person name="Rose D.J."/>
            <person name="Mau B."/>
            <person name="Zhou S."/>
            <person name="Schwartz D.C."/>
            <person name="Fetherston J.D."/>
            <person name="Lindler L.E."/>
            <person name="Brubaker R.R."/>
            <person name="Plano G.V."/>
            <person name="Straley S.C."/>
            <person name="McDonough K.A."/>
            <person name="Nilles M.L."/>
            <person name="Matson J.S."/>
            <person name="Blattner F.R."/>
            <person name="Perry R.D."/>
        </authorList>
    </citation>
    <scope>NUCLEOTIDE SEQUENCE [LARGE SCALE GENOMIC DNA]</scope>
    <source>
        <strain>KIM10+ / Biovar Mediaevalis</strain>
    </source>
</reference>
<reference key="3">
    <citation type="journal article" date="2004" name="DNA Res.">
        <title>Complete genome sequence of Yersinia pestis strain 91001, an isolate avirulent to humans.</title>
        <authorList>
            <person name="Song Y."/>
            <person name="Tong Z."/>
            <person name="Wang J."/>
            <person name="Wang L."/>
            <person name="Guo Z."/>
            <person name="Han Y."/>
            <person name="Zhang J."/>
            <person name="Pei D."/>
            <person name="Zhou D."/>
            <person name="Qin H."/>
            <person name="Pang X."/>
            <person name="Han Y."/>
            <person name="Zhai J."/>
            <person name="Li M."/>
            <person name="Cui B."/>
            <person name="Qi Z."/>
            <person name="Jin L."/>
            <person name="Dai R."/>
            <person name="Chen F."/>
            <person name="Li S."/>
            <person name="Ye C."/>
            <person name="Du Z."/>
            <person name="Lin W."/>
            <person name="Wang J."/>
            <person name="Yu J."/>
            <person name="Yang H."/>
            <person name="Wang J."/>
            <person name="Huang P."/>
            <person name="Yang R."/>
        </authorList>
    </citation>
    <scope>NUCLEOTIDE SEQUENCE [LARGE SCALE GENOMIC DNA]</scope>
    <source>
        <strain>91001 / Biovar Mediaevalis</strain>
    </source>
</reference>
<name>5DNU_YERPE</name>
<keyword id="KW-0963">Cytoplasm</keyword>
<keyword id="KW-0378">Hydrolase</keyword>
<keyword id="KW-0479">Metal-binding</keyword>
<keyword id="KW-0547">Nucleotide-binding</keyword>
<keyword id="KW-1185">Reference proteome</keyword>
<gene>
    <name type="ordered locus">YPO2559</name>
    <name type="ordered locus">y1627</name>
    <name type="ordered locus">YP_2370</name>
</gene>
<proteinExistence type="inferred from homology"/>
<protein>
    <recommendedName>
        <fullName evidence="1">5'-deoxynucleotidase YPO2559</fullName>
        <ecNumber evidence="1">3.1.3.89</ecNumber>
    </recommendedName>
    <alternativeName>
        <fullName evidence="1">5'-deoxyribonucleotidase</fullName>
    </alternativeName>
    <alternativeName>
        <fullName evidence="1">Nucleoside 5'-monophosphate phosphohydrolase</fullName>
    </alternativeName>
</protein>
<accession>Q8ZDK3</accession>
<accession>Q0WDW8</accession>
<organism>
    <name type="scientific">Yersinia pestis</name>
    <dbReference type="NCBI Taxonomy" id="632"/>
    <lineage>
        <taxon>Bacteria</taxon>
        <taxon>Pseudomonadati</taxon>
        <taxon>Pseudomonadota</taxon>
        <taxon>Gammaproteobacteria</taxon>
        <taxon>Enterobacterales</taxon>
        <taxon>Yersiniaceae</taxon>
        <taxon>Yersinia</taxon>
    </lineage>
</organism>
<evidence type="ECO:0000255" key="1">
    <source>
        <dbReference type="HAMAP-Rule" id="MF_01100"/>
    </source>
</evidence>
<evidence type="ECO:0000255" key="2">
    <source>
        <dbReference type="PROSITE-ProRule" id="PRU01175"/>
    </source>
</evidence>
<sequence>MSHFFAHLSRLKLINRWPLMRNVRTENVSEHSLQVAFVAHALAIIKNRKFNGNLNAERIALLAMYHDASEVITGDLPTPIKYHNPKIAHEYKKIEKVAQQKLIEMLPKELQHDFRCLLDEHYYSEEEKALVKQADALCAYLKCLEELSAGNNEFIQAKARLEKTLAIRQSPEMDYFMAVFVPSFSLSLDEISLDSLD</sequence>
<comment type="function">
    <text evidence="1">Catalyzes the strictly specific dephosphorylation of 2'-deoxyribonucleoside 5'-monophosphates.</text>
</comment>
<comment type="catalytic activity">
    <reaction evidence="1">
        <text>a 2'-deoxyribonucleoside 5'-phosphate + H2O = a 2'-deoxyribonucleoside + phosphate</text>
        <dbReference type="Rhea" id="RHEA:36167"/>
        <dbReference type="ChEBI" id="CHEBI:15377"/>
        <dbReference type="ChEBI" id="CHEBI:18274"/>
        <dbReference type="ChEBI" id="CHEBI:43474"/>
        <dbReference type="ChEBI" id="CHEBI:65317"/>
        <dbReference type="EC" id="3.1.3.89"/>
    </reaction>
</comment>
<comment type="cofactor">
    <cofactor evidence="1">
        <name>a divalent metal cation</name>
        <dbReference type="ChEBI" id="CHEBI:60240"/>
    </cofactor>
</comment>
<comment type="subunit">
    <text evidence="1">Homodimer.</text>
</comment>
<comment type="subcellular location">
    <subcellularLocation>
        <location evidence="1">Cytoplasm</location>
    </subcellularLocation>
</comment>
<comment type="similarity">
    <text evidence="1">Belongs to the 5DNU family.</text>
</comment>
<feature type="chain" id="PRO_0000095065" description="5'-deoxynucleotidase YPO2559">
    <location>
        <begin position="1"/>
        <end position="197"/>
    </location>
</feature>
<feature type="domain" description="HD" evidence="2">
    <location>
        <begin position="28"/>
        <end position="140"/>
    </location>
</feature>
<feature type="binding site" evidence="1">
    <location>
        <begin position="16"/>
        <end position="17"/>
    </location>
    <ligand>
        <name>substrate</name>
    </ligand>
</feature>
<feature type="binding site" evidence="1">
    <location>
        <position position="31"/>
    </location>
    <ligand>
        <name>a divalent metal cation</name>
        <dbReference type="ChEBI" id="CHEBI:60240"/>
    </ligand>
</feature>
<feature type="binding site" evidence="1">
    <location>
        <position position="31"/>
    </location>
    <ligand>
        <name>substrate</name>
    </ligand>
</feature>
<feature type="binding site" evidence="1">
    <location>
        <position position="66"/>
    </location>
    <ligand>
        <name>a divalent metal cation</name>
        <dbReference type="ChEBI" id="CHEBI:60240"/>
    </ligand>
</feature>
<feature type="binding site" evidence="1">
    <location>
        <position position="67"/>
    </location>
    <ligand>
        <name>a divalent metal cation</name>
        <dbReference type="ChEBI" id="CHEBI:60240"/>
    </ligand>
</feature>
<feature type="binding site" evidence="1">
    <location>
        <position position="67"/>
    </location>
    <ligand>
        <name>substrate</name>
    </ligand>
</feature>
<feature type="binding site" evidence="1">
    <location>
        <begin position="75"/>
        <end position="78"/>
    </location>
    <ligand>
        <name>substrate</name>
    </ligand>
</feature>
<feature type="binding site" evidence="1">
    <location>
        <position position="135"/>
    </location>
    <ligand>
        <name>a divalent metal cation</name>
        <dbReference type="ChEBI" id="CHEBI:60240"/>
    </ligand>
</feature>
<feature type="binding site" evidence="1">
    <location>
        <position position="135"/>
    </location>
    <ligand>
        <name>substrate</name>
    </ligand>
</feature>
<feature type="site" description="Appears to be important in orienting the phosphate for catalysis" evidence="1">
    <location>
        <position position="16"/>
    </location>
</feature>